<accession>A8WWX1</accession>
<protein>
    <recommendedName>
        <fullName>Mitogen-activated protein kinase kinase kinase mom-4</fullName>
        <ecNumber>2.7.11.25</ecNumber>
    </recommendedName>
</protein>
<organism>
    <name type="scientific">Caenorhabditis briggsae</name>
    <dbReference type="NCBI Taxonomy" id="6238"/>
    <lineage>
        <taxon>Eukaryota</taxon>
        <taxon>Metazoa</taxon>
        <taxon>Ecdysozoa</taxon>
        <taxon>Nematoda</taxon>
        <taxon>Chromadorea</taxon>
        <taxon>Rhabditida</taxon>
        <taxon>Rhabditina</taxon>
        <taxon>Rhabditomorpha</taxon>
        <taxon>Rhabditoidea</taxon>
        <taxon>Rhabditidae</taxon>
        <taxon>Peloderinae</taxon>
        <taxon>Caenorhabditis</taxon>
    </lineage>
</organism>
<evidence type="ECO:0000250" key="1">
    <source>
        <dbReference type="UniProtKB" id="O43318"/>
    </source>
</evidence>
<evidence type="ECO:0000250" key="2">
    <source>
        <dbReference type="UniProtKB" id="Q9XTC6"/>
    </source>
</evidence>
<evidence type="ECO:0000255" key="3">
    <source>
        <dbReference type="PROSITE-ProRule" id="PRU00159"/>
    </source>
</evidence>
<evidence type="ECO:0000256" key="4">
    <source>
        <dbReference type="SAM" id="MobiDB-lite"/>
    </source>
</evidence>
<evidence type="ECO:0000312" key="5">
    <source>
        <dbReference type="EMBL" id="CAP24673.1"/>
    </source>
</evidence>
<sequence>MDTSPHSKPSSSSASQSSHSPSPAPVTAPRKTRDSGLCMTQDIPEIPTHCIDNLNSHQLGRGTYGIVEKTRYRRSRNHEYRPAAIKYSSPIHLATLIREAKVMWALRDHSNIIKIYGLYRDARHGQGVVMEYMDCGSMSELIYDRKSIDYTIDHVASWLYQMASAVNTFHRNDQVHRDLKLQNMLLCDRYRTMKLCDFGTFTAMHQSMTSNRGTPITMAPEVFRCEEYNQKSDIYSIGIIMWQMIARNHPYNRNLSVPGLLYNVATASLRPPELDCNPILSDFYKQCWHDDPVSRPTAAECLQYFTALKTEYPNGNVPLADANTNRPVETPPPRVHRPSGLGSASGSGLGTNGRTPTASNHLNAPQAVNTHRRNRSETIQMKPELPYPVMPGEVAASSSGAFRGPRSQSEAKNLRDAGRSQSGQRHPHRNAPPIPIDDRRDSNESNEKDAIFMELLRNDDTRPVDPDARDEASLDIFHQHCSSNKEYADALLLKKEVLRAKHELLSRWPQHQRHVELLERQNYLEQEIAKLEYNSDDDFSITERL</sequence>
<keyword id="KW-0067">ATP-binding</keyword>
<keyword id="KW-0217">Developmental protein</keyword>
<keyword id="KW-0418">Kinase</keyword>
<keyword id="KW-0460">Magnesium</keyword>
<keyword id="KW-0479">Metal-binding</keyword>
<keyword id="KW-0547">Nucleotide-binding</keyword>
<keyword id="KW-1185">Reference proteome</keyword>
<keyword id="KW-0723">Serine/threonine-protein kinase</keyword>
<keyword id="KW-0808">Transferase</keyword>
<keyword id="KW-0879">Wnt signaling pathway</keyword>
<dbReference type="EC" id="2.7.11.25"/>
<dbReference type="EMBL" id="HE600906">
    <property type="protein sequence ID" value="CAP24673.1"/>
    <property type="molecule type" value="Genomic_DNA"/>
</dbReference>
<dbReference type="SMR" id="A8WWX1"/>
<dbReference type="FunCoup" id="A8WWX1">
    <property type="interactions" value="2034"/>
</dbReference>
<dbReference type="STRING" id="6238.A8WWX1"/>
<dbReference type="EnsemblMetazoa" id="CBG03852.1">
    <property type="protein sequence ID" value="CBG03852.1"/>
    <property type="gene ID" value="WBGene00026627"/>
</dbReference>
<dbReference type="KEGG" id="cbr:CBG_03852"/>
<dbReference type="CTD" id="8581279"/>
<dbReference type="WormBase" id="CBG03852">
    <property type="protein sequence ID" value="CBP06575"/>
    <property type="gene ID" value="WBGene00026627"/>
    <property type="gene designation" value="Cbr-mom-4"/>
</dbReference>
<dbReference type="eggNOG" id="KOG0192">
    <property type="taxonomic scope" value="Eukaryota"/>
</dbReference>
<dbReference type="HOGENOM" id="CLU_509264_0_0_1"/>
<dbReference type="InParanoid" id="A8WWX1"/>
<dbReference type="OMA" id="REAKVMW"/>
<dbReference type="Proteomes" id="UP000008549">
    <property type="component" value="Unassembled WGS sequence"/>
</dbReference>
<dbReference type="GO" id="GO:0005737">
    <property type="term" value="C:cytoplasm"/>
    <property type="evidence" value="ECO:0000318"/>
    <property type="project" value="GO_Central"/>
</dbReference>
<dbReference type="GO" id="GO:0005524">
    <property type="term" value="F:ATP binding"/>
    <property type="evidence" value="ECO:0007669"/>
    <property type="project" value="UniProtKB-KW"/>
</dbReference>
<dbReference type="GO" id="GO:0004709">
    <property type="term" value="F:MAP kinase kinase kinase activity"/>
    <property type="evidence" value="ECO:0007669"/>
    <property type="project" value="UniProtKB-EC"/>
</dbReference>
<dbReference type="GO" id="GO:0046872">
    <property type="term" value="F:metal ion binding"/>
    <property type="evidence" value="ECO:0007669"/>
    <property type="project" value="UniProtKB-KW"/>
</dbReference>
<dbReference type="GO" id="GO:0004672">
    <property type="term" value="F:protein kinase activity"/>
    <property type="evidence" value="ECO:0000318"/>
    <property type="project" value="GO_Central"/>
</dbReference>
<dbReference type="GO" id="GO:0106310">
    <property type="term" value="F:protein serine kinase activity"/>
    <property type="evidence" value="ECO:0007669"/>
    <property type="project" value="RHEA"/>
</dbReference>
<dbReference type="GO" id="GO:0008356">
    <property type="term" value="P:asymmetric cell division"/>
    <property type="evidence" value="ECO:0007669"/>
    <property type="project" value="EnsemblMetazoa"/>
</dbReference>
<dbReference type="GO" id="GO:0045167">
    <property type="term" value="P:asymmetric protein localization involved in cell fate determination"/>
    <property type="evidence" value="ECO:0007669"/>
    <property type="project" value="EnsemblMetazoa"/>
</dbReference>
<dbReference type="GO" id="GO:0060070">
    <property type="term" value="P:canonical Wnt signaling pathway"/>
    <property type="evidence" value="ECO:0007669"/>
    <property type="project" value="EnsemblMetazoa"/>
</dbReference>
<dbReference type="GO" id="GO:0048557">
    <property type="term" value="P:embryonic digestive tract morphogenesis"/>
    <property type="evidence" value="ECO:0007669"/>
    <property type="project" value="EnsemblMetazoa"/>
</dbReference>
<dbReference type="GO" id="GO:0001714">
    <property type="term" value="P:endodermal cell fate specification"/>
    <property type="evidence" value="ECO:0007669"/>
    <property type="project" value="EnsemblMetazoa"/>
</dbReference>
<dbReference type="GO" id="GO:0042694">
    <property type="term" value="P:muscle cell fate specification"/>
    <property type="evidence" value="ECO:0007669"/>
    <property type="project" value="EnsemblMetazoa"/>
</dbReference>
<dbReference type="GO" id="GO:0007165">
    <property type="term" value="P:signal transduction"/>
    <property type="evidence" value="ECO:0000318"/>
    <property type="project" value="GO_Central"/>
</dbReference>
<dbReference type="Gene3D" id="1.10.510.10">
    <property type="entry name" value="Transferase(Phosphotransferase) domain 1"/>
    <property type="match status" value="1"/>
</dbReference>
<dbReference type="InterPro" id="IPR011009">
    <property type="entry name" value="Kinase-like_dom_sf"/>
</dbReference>
<dbReference type="InterPro" id="IPR000719">
    <property type="entry name" value="Prot_kinase_dom"/>
</dbReference>
<dbReference type="InterPro" id="IPR017441">
    <property type="entry name" value="Protein_kinase_ATP_BS"/>
</dbReference>
<dbReference type="InterPro" id="IPR001245">
    <property type="entry name" value="Ser-Thr/Tyr_kinase_cat_dom"/>
</dbReference>
<dbReference type="PANTHER" id="PTHR46716">
    <property type="entry name" value="MITOGEN-ACTIVATED PROTEIN KINASE KINASE KINASE 7"/>
    <property type="match status" value="1"/>
</dbReference>
<dbReference type="PANTHER" id="PTHR46716:SF1">
    <property type="entry name" value="MITOGEN-ACTIVATED PROTEIN KINASE KINASE KINASE 7"/>
    <property type="match status" value="1"/>
</dbReference>
<dbReference type="Pfam" id="PF00069">
    <property type="entry name" value="Pkinase"/>
    <property type="match status" value="1"/>
</dbReference>
<dbReference type="PRINTS" id="PR00109">
    <property type="entry name" value="TYRKINASE"/>
</dbReference>
<dbReference type="SMART" id="SM00220">
    <property type="entry name" value="S_TKc"/>
    <property type="match status" value="1"/>
</dbReference>
<dbReference type="SUPFAM" id="SSF56112">
    <property type="entry name" value="Protein kinase-like (PK-like)"/>
    <property type="match status" value="1"/>
</dbReference>
<dbReference type="PROSITE" id="PS00107">
    <property type="entry name" value="PROTEIN_KINASE_ATP"/>
    <property type="match status" value="1"/>
</dbReference>
<dbReference type="PROSITE" id="PS50011">
    <property type="entry name" value="PROTEIN_KINASE_DOM"/>
    <property type="match status" value="1"/>
</dbReference>
<feature type="chain" id="PRO_0000351144" description="Mitogen-activated protein kinase kinase kinase mom-4">
    <location>
        <begin position="1"/>
        <end position="545"/>
    </location>
</feature>
<feature type="domain" description="Protein kinase" evidence="3">
    <location>
        <begin position="53"/>
        <end position="308"/>
    </location>
</feature>
<feature type="region of interest" description="Disordered" evidence="4">
    <location>
        <begin position="1"/>
        <end position="35"/>
    </location>
</feature>
<feature type="region of interest" description="Disordered" evidence="4">
    <location>
        <begin position="316"/>
        <end position="444"/>
    </location>
</feature>
<feature type="compositionally biased region" description="Low complexity" evidence="4">
    <location>
        <begin position="1"/>
        <end position="21"/>
    </location>
</feature>
<feature type="compositionally biased region" description="Polar residues" evidence="4">
    <location>
        <begin position="352"/>
        <end position="369"/>
    </location>
</feature>
<feature type="compositionally biased region" description="Polar residues" evidence="4">
    <location>
        <begin position="396"/>
        <end position="411"/>
    </location>
</feature>
<feature type="active site" description="Proton acceptor" evidence="1 3">
    <location>
        <position position="178"/>
    </location>
</feature>
<feature type="binding site" evidence="1 3">
    <location>
        <begin position="59"/>
        <end position="67"/>
    </location>
    <ligand>
        <name>ATP</name>
        <dbReference type="ChEBI" id="CHEBI:30616"/>
    </ligand>
</feature>
<feature type="binding site" evidence="1 3">
    <location>
        <position position="86"/>
    </location>
    <ligand>
        <name>ATP</name>
        <dbReference type="ChEBI" id="CHEBI:30616"/>
    </ligand>
</feature>
<name>MOM4_CAEBR</name>
<reference evidence="5" key="1">
    <citation type="journal article" date="2003" name="PLoS Biol.">
        <title>The genome sequence of Caenorhabditis briggsae: a platform for comparative genomics.</title>
        <authorList>
            <person name="Stein L.D."/>
            <person name="Bao Z."/>
            <person name="Blasiar D."/>
            <person name="Blumenthal T."/>
            <person name="Brent M.R."/>
            <person name="Chen N."/>
            <person name="Chinwalla A."/>
            <person name="Clarke L."/>
            <person name="Clee C."/>
            <person name="Coghlan A."/>
            <person name="Coulson A."/>
            <person name="D'Eustachio P."/>
            <person name="Fitch D.H.A."/>
            <person name="Fulton L.A."/>
            <person name="Fulton R.E."/>
            <person name="Griffiths-Jones S."/>
            <person name="Harris T.W."/>
            <person name="Hillier L.W."/>
            <person name="Kamath R."/>
            <person name="Kuwabara P.E."/>
            <person name="Mardis E.R."/>
            <person name="Marra M.A."/>
            <person name="Miner T.L."/>
            <person name="Minx P."/>
            <person name="Mullikin J.C."/>
            <person name="Plumb R.W."/>
            <person name="Rogers J."/>
            <person name="Schein J.E."/>
            <person name="Sohrmann M."/>
            <person name="Spieth J."/>
            <person name="Stajich J.E."/>
            <person name="Wei C."/>
            <person name="Willey D."/>
            <person name="Wilson R.K."/>
            <person name="Durbin R.M."/>
            <person name="Waterston R.H."/>
        </authorList>
    </citation>
    <scope>NUCLEOTIDE SEQUENCE [LARGE SCALE GENOMIC DNA]</scope>
    <source>
        <strain evidence="5">AF16</strain>
    </source>
</reference>
<proteinExistence type="inferred from homology"/>
<comment type="function">
    <text evidence="2">Part of the Wnt signaling pathway essential for the specification of the mesodermal cell fate in early embryos. Stimulates the wrm-1/lit-1-dependent phosphorylation of pop-1 and plays a role in the initial nuclear accumulation of wrm-1 (By similarity).</text>
</comment>
<comment type="catalytic activity">
    <reaction evidence="1">
        <text>L-seryl-[protein] + ATP = O-phospho-L-seryl-[protein] + ADP + H(+)</text>
        <dbReference type="Rhea" id="RHEA:17989"/>
        <dbReference type="Rhea" id="RHEA-COMP:9863"/>
        <dbReference type="Rhea" id="RHEA-COMP:11604"/>
        <dbReference type="ChEBI" id="CHEBI:15378"/>
        <dbReference type="ChEBI" id="CHEBI:29999"/>
        <dbReference type="ChEBI" id="CHEBI:30616"/>
        <dbReference type="ChEBI" id="CHEBI:83421"/>
        <dbReference type="ChEBI" id="CHEBI:456216"/>
        <dbReference type="EC" id="2.7.11.25"/>
    </reaction>
</comment>
<comment type="catalytic activity">
    <reaction evidence="1">
        <text>L-threonyl-[protein] + ATP = O-phospho-L-threonyl-[protein] + ADP + H(+)</text>
        <dbReference type="Rhea" id="RHEA:46608"/>
        <dbReference type="Rhea" id="RHEA-COMP:11060"/>
        <dbReference type="Rhea" id="RHEA-COMP:11605"/>
        <dbReference type="ChEBI" id="CHEBI:15378"/>
        <dbReference type="ChEBI" id="CHEBI:30013"/>
        <dbReference type="ChEBI" id="CHEBI:30616"/>
        <dbReference type="ChEBI" id="CHEBI:61977"/>
        <dbReference type="ChEBI" id="CHEBI:456216"/>
        <dbReference type="EC" id="2.7.11.25"/>
    </reaction>
</comment>
<comment type="cofactor">
    <cofactor evidence="1">
        <name>Mg(2+)</name>
        <dbReference type="ChEBI" id="CHEBI:18420"/>
    </cofactor>
</comment>
<comment type="subunit">
    <text evidence="2">Interacts with, and is activated by, tap-1.</text>
</comment>
<comment type="similarity">
    <text evidence="1">Belongs to the protein kinase superfamily. STE Ser/Thr protein kinase family. MAP kinase kinase kinase subfamily.</text>
</comment>
<gene>
    <name evidence="2" type="primary">mom-4</name>
    <name type="ORF">CBG03852</name>
</gene>